<protein>
    <recommendedName>
        <fullName evidence="1">Large ribosomal subunit protein bL21</fullName>
    </recommendedName>
    <alternativeName>
        <fullName evidence="2">50S ribosomal protein L21</fullName>
    </alternativeName>
</protein>
<sequence>MSTYAIIKTGGKQVKVEVGQAIYVEKIDAEAGAEITFNEVVLVGGDKTVVGTPVVEGATVVGTVEKQGKQKKVVTFKYKPKKGSHRKQGHRQPYTKVVINAIKA</sequence>
<comment type="function">
    <text evidence="1">This protein binds to 23S rRNA in the presence of protein L20.</text>
</comment>
<comment type="subunit">
    <text evidence="1">Part of the 50S ribosomal subunit. Contacts protein L20.</text>
</comment>
<comment type="similarity">
    <text evidence="1">Belongs to the bacterial ribosomal protein bL21 family.</text>
</comment>
<proteinExistence type="inferred from homology"/>
<name>RL21_STRE4</name>
<dbReference type="EMBL" id="FM204883">
    <property type="protein sequence ID" value="CAW94116.1"/>
    <property type="molecule type" value="Genomic_DNA"/>
</dbReference>
<dbReference type="RefSeq" id="WP_012515752.1">
    <property type="nucleotide sequence ID" value="NC_012471.1"/>
</dbReference>
<dbReference type="SMR" id="C0M7I2"/>
<dbReference type="GeneID" id="83705030"/>
<dbReference type="KEGG" id="seu:SEQ_1324"/>
<dbReference type="HOGENOM" id="CLU_061463_3_1_9"/>
<dbReference type="OrthoDB" id="9813334at2"/>
<dbReference type="Proteomes" id="UP000001365">
    <property type="component" value="Chromosome"/>
</dbReference>
<dbReference type="GO" id="GO:0005737">
    <property type="term" value="C:cytoplasm"/>
    <property type="evidence" value="ECO:0007669"/>
    <property type="project" value="UniProtKB-ARBA"/>
</dbReference>
<dbReference type="GO" id="GO:1990904">
    <property type="term" value="C:ribonucleoprotein complex"/>
    <property type="evidence" value="ECO:0007669"/>
    <property type="project" value="UniProtKB-KW"/>
</dbReference>
<dbReference type="GO" id="GO:0005840">
    <property type="term" value="C:ribosome"/>
    <property type="evidence" value="ECO:0007669"/>
    <property type="project" value="UniProtKB-KW"/>
</dbReference>
<dbReference type="GO" id="GO:0019843">
    <property type="term" value="F:rRNA binding"/>
    <property type="evidence" value="ECO:0007669"/>
    <property type="project" value="UniProtKB-UniRule"/>
</dbReference>
<dbReference type="GO" id="GO:0003735">
    <property type="term" value="F:structural constituent of ribosome"/>
    <property type="evidence" value="ECO:0007669"/>
    <property type="project" value="InterPro"/>
</dbReference>
<dbReference type="GO" id="GO:0006412">
    <property type="term" value="P:translation"/>
    <property type="evidence" value="ECO:0007669"/>
    <property type="project" value="UniProtKB-UniRule"/>
</dbReference>
<dbReference type="HAMAP" id="MF_01363">
    <property type="entry name" value="Ribosomal_bL21"/>
    <property type="match status" value="1"/>
</dbReference>
<dbReference type="InterPro" id="IPR028909">
    <property type="entry name" value="bL21-like"/>
</dbReference>
<dbReference type="InterPro" id="IPR036164">
    <property type="entry name" value="bL21-like_sf"/>
</dbReference>
<dbReference type="InterPro" id="IPR001787">
    <property type="entry name" value="Ribosomal_bL21"/>
</dbReference>
<dbReference type="InterPro" id="IPR018258">
    <property type="entry name" value="Ribosomal_bL21_CS"/>
</dbReference>
<dbReference type="NCBIfam" id="TIGR00061">
    <property type="entry name" value="L21"/>
    <property type="match status" value="1"/>
</dbReference>
<dbReference type="PANTHER" id="PTHR21349">
    <property type="entry name" value="50S RIBOSOMAL PROTEIN L21"/>
    <property type="match status" value="1"/>
</dbReference>
<dbReference type="PANTHER" id="PTHR21349:SF0">
    <property type="entry name" value="LARGE RIBOSOMAL SUBUNIT PROTEIN BL21M"/>
    <property type="match status" value="1"/>
</dbReference>
<dbReference type="Pfam" id="PF00829">
    <property type="entry name" value="Ribosomal_L21p"/>
    <property type="match status" value="1"/>
</dbReference>
<dbReference type="SUPFAM" id="SSF141091">
    <property type="entry name" value="L21p-like"/>
    <property type="match status" value="1"/>
</dbReference>
<dbReference type="PROSITE" id="PS01169">
    <property type="entry name" value="RIBOSOMAL_L21"/>
    <property type="match status" value="1"/>
</dbReference>
<organism>
    <name type="scientific">Streptococcus equi subsp. equi (strain 4047)</name>
    <dbReference type="NCBI Taxonomy" id="553482"/>
    <lineage>
        <taxon>Bacteria</taxon>
        <taxon>Bacillati</taxon>
        <taxon>Bacillota</taxon>
        <taxon>Bacilli</taxon>
        <taxon>Lactobacillales</taxon>
        <taxon>Streptococcaceae</taxon>
        <taxon>Streptococcus</taxon>
    </lineage>
</organism>
<keyword id="KW-0687">Ribonucleoprotein</keyword>
<keyword id="KW-0689">Ribosomal protein</keyword>
<keyword id="KW-0694">RNA-binding</keyword>
<keyword id="KW-0699">rRNA-binding</keyword>
<feature type="chain" id="PRO_1000166741" description="Large ribosomal subunit protein bL21">
    <location>
        <begin position="1"/>
        <end position="104"/>
    </location>
</feature>
<accession>C0M7I2</accession>
<reference key="1">
    <citation type="journal article" date="2009" name="PLoS Pathog.">
        <title>Genomic evidence for the evolution of Streptococcus equi: host restriction, increased virulence, and genetic exchange with human pathogens.</title>
        <authorList>
            <person name="Holden M.T.G."/>
            <person name="Heather Z."/>
            <person name="Paillot R."/>
            <person name="Steward K.F."/>
            <person name="Webb K."/>
            <person name="Ainslie F."/>
            <person name="Jourdan T."/>
            <person name="Bason N.C."/>
            <person name="Holroyd N.E."/>
            <person name="Mungall K."/>
            <person name="Quail M.A."/>
            <person name="Sanders M."/>
            <person name="Simmonds M."/>
            <person name="Willey D."/>
            <person name="Brooks K."/>
            <person name="Aanensen D.M."/>
            <person name="Spratt B.G."/>
            <person name="Jolley K.A."/>
            <person name="Maiden M.C.J."/>
            <person name="Kehoe M."/>
            <person name="Chanter N."/>
            <person name="Bentley S.D."/>
            <person name="Robinson C."/>
            <person name="Maskell D.J."/>
            <person name="Parkhill J."/>
            <person name="Waller A.S."/>
        </authorList>
    </citation>
    <scope>NUCLEOTIDE SEQUENCE [LARGE SCALE GENOMIC DNA]</scope>
    <source>
        <strain>4047</strain>
    </source>
</reference>
<gene>
    <name evidence="1" type="primary">rplU</name>
    <name type="ordered locus">SEQ_1324</name>
</gene>
<evidence type="ECO:0000255" key="1">
    <source>
        <dbReference type="HAMAP-Rule" id="MF_01363"/>
    </source>
</evidence>
<evidence type="ECO:0000305" key="2"/>